<feature type="chain" id="PRO_0000005349" description="Chondrosurfactant protein" evidence="1">
    <location>
        <begin position="1"/>
        <end position="210"/>
    </location>
</feature>
<feature type="propeptide" id="PRO_0000005350" evidence="1">
    <location>
        <begin position="211"/>
        <end position="214"/>
    </location>
</feature>
<feature type="chain" id="PRO_0000005351" description="Chondromodulin-1" evidence="1">
    <location>
        <begin position="215"/>
        <end position="334"/>
    </location>
</feature>
<feature type="transmembrane region" description="Helical" evidence="2">
    <location>
        <begin position="46"/>
        <end position="66"/>
    </location>
</feature>
<feature type="domain" description="BRICHOS" evidence="3">
    <location>
        <begin position="105"/>
        <end position="201"/>
    </location>
</feature>
<feature type="region of interest" description="Disordered" evidence="4">
    <location>
        <begin position="212"/>
        <end position="270"/>
    </location>
</feature>
<feature type="glycosylation site" description="N-linked (GlcNAc...) asparagine" evidence="2">
    <location>
        <position position="243"/>
    </location>
</feature>
<feature type="disulfide bond" evidence="1">
    <location>
        <begin position="132"/>
        <end position="193"/>
    </location>
</feature>
<feature type="disulfide bond" evidence="1">
    <location>
        <begin position="282"/>
        <end position="286"/>
    </location>
</feature>
<feature type="disulfide bond" evidence="1">
    <location>
        <begin position="283"/>
        <end position="323"/>
    </location>
</feature>
<feature type="disulfide bond" evidence="1">
    <location>
        <begin position="293"/>
        <end position="317"/>
    </location>
</feature>
<feature type="disulfide bond" evidence="1">
    <location>
        <begin position="297"/>
        <end position="313"/>
    </location>
</feature>
<feature type="sequence conflict" description="In Ref. 2; BAB29095." evidence="6" ref="2">
    <original>A</original>
    <variation>R</variation>
    <location>
        <position position="108"/>
    </location>
</feature>
<feature type="sequence conflict" description="In Ref. 1; AAD00027." evidence="6" ref="1">
    <original>E</original>
    <variation>K</variation>
    <location>
        <position position="109"/>
    </location>
</feature>
<feature type="sequence conflict" description="In Ref. 1; AAD00027." evidence="6" ref="1">
    <original>A</original>
    <variation>V</variation>
    <location>
        <position position="163"/>
    </location>
</feature>
<feature type="sequence conflict" description="In Ref. 2; BAB29095." evidence="6" ref="2">
    <original>K</original>
    <variation>KANFA</variation>
    <location>
        <position position="207"/>
    </location>
</feature>
<comment type="function">
    <text evidence="1 5">Bifunctional growth regulator that stimulates the growth of cultured chondrocytes in the presence of basic fibroblast growth factor (FGF) but inhibits the growth of cultured vascular endothelial cells. May contribute to the rapid growth of cartilage and vascular invasion prior to the replacement of cartilage by bone during endochondral bone development (By similarity). Inhibits in vitro tube formation and mobilization of endothelial cells (By similarity). Plays a role as antiangiogenic factor in cardiac valves to suppress neovascularization.</text>
</comment>
<comment type="subcellular location">
    <molecule>Chondromodulin-1</molecule>
    <subcellularLocation>
        <location evidence="1">Secreted</location>
        <location evidence="1">Extracellular space</location>
        <location evidence="1">Extracellular matrix</location>
    </subcellularLocation>
    <text evidence="1">Accumulated in the inter-territorial matrix of cartilage.</text>
</comment>
<comment type="subcellular location">
    <molecule>Chondrosurfactant protein</molecule>
    <subcellularLocation>
        <location evidence="6">Endomembrane system</location>
        <topology evidence="6">Single-pass membrane protein</topology>
    </subcellularLocation>
</comment>
<comment type="tissue specificity">
    <text evidence="5">Detected in the four cardiac valves, valvular interstitial cells and extracellular matrix (at protein level).</text>
</comment>
<comment type="developmental stage">
    <text evidence="5">Detected from 9.5 dpc in the cardiac valve precursor cells from the atrioventricular cushions and outflow. At 10 dpc expressed in the cardiac jelly covering the trabeculating cardiomyocytes of the left ventricle, the outer curvature of the right ventricle and the outflow tract. Expression in the ventricles decreased gradually as development progressed, and disappeared by mid-embryogenesis (at protein level).</text>
</comment>
<comment type="PTM">
    <text evidence="1">After cleavage, the post-translationally modified ChM-I is secreted as a glycoprotein.</text>
</comment>
<comment type="disruption phenotype">
    <text evidence="5">Aged mice show enhanced VEGFA expression, angiogenesis, inflammatory cell infiltration, aortic stenosis, lipid deposition and calcification in the cardiac valves.</text>
</comment>
<comment type="similarity">
    <text evidence="6">Belongs to the chondromodulin-1 family.</text>
</comment>
<protein>
    <recommendedName>
        <fullName evidence="6">Leukocyte cell-derived chemotaxin 1</fullName>
    </recommendedName>
    <alternativeName>
        <fullName evidence="7">Chondromodulin</fullName>
    </alternativeName>
    <component>
        <recommendedName>
            <fullName>Chondrosurfactant protein</fullName>
            <shortName>CH-SP</shortName>
        </recommendedName>
    </component>
    <component>
        <recommendedName>
            <fullName>Chondromodulin-1</fullName>
        </recommendedName>
        <alternativeName>
            <fullName>Chondromodulin-I</fullName>
            <shortName>ChM-I</shortName>
        </alternativeName>
    </component>
</protein>
<keyword id="KW-0891">Chondrogenesis</keyword>
<keyword id="KW-0165">Cleavage on pair of basic residues</keyword>
<keyword id="KW-0217">Developmental protein</keyword>
<keyword id="KW-0221">Differentiation</keyword>
<keyword id="KW-1015">Disulfide bond</keyword>
<keyword id="KW-0272">Extracellular matrix</keyword>
<keyword id="KW-0325">Glycoprotein</keyword>
<keyword id="KW-0472">Membrane</keyword>
<keyword id="KW-1185">Reference proteome</keyword>
<keyword id="KW-0964">Secreted</keyword>
<keyword id="KW-0812">Transmembrane</keyword>
<keyword id="KW-1133">Transmembrane helix</keyword>
<organism>
    <name type="scientific">Mus musculus</name>
    <name type="common">Mouse</name>
    <dbReference type="NCBI Taxonomy" id="10090"/>
    <lineage>
        <taxon>Eukaryota</taxon>
        <taxon>Metazoa</taxon>
        <taxon>Chordata</taxon>
        <taxon>Craniata</taxon>
        <taxon>Vertebrata</taxon>
        <taxon>Euteleostomi</taxon>
        <taxon>Mammalia</taxon>
        <taxon>Eutheria</taxon>
        <taxon>Euarchontoglires</taxon>
        <taxon>Glires</taxon>
        <taxon>Rodentia</taxon>
        <taxon>Myomorpha</taxon>
        <taxon>Muroidea</taxon>
        <taxon>Muridae</taxon>
        <taxon>Murinae</taxon>
        <taxon>Mus</taxon>
        <taxon>Mus</taxon>
    </lineage>
</organism>
<gene>
    <name evidence="7" type="primary">Cnmd</name>
    <name evidence="7" type="synonym">Chmi</name>
    <name evidence="7" type="synonym">Lect1</name>
</gene>
<proteinExistence type="evidence at protein level"/>
<sequence>MTENSDKVPITMVGPEDVEFCSPPAYTTVTVKPSGSPTRLLKVGAVVLISGAVLLLFGAIGAFYFWKGNDNHIYNVHYSMSINGKLQDGSMEIDAVNNLETFKMGSGAEEAIEVNDFKNGITGIRFAGGEKCYIKAQVKARIPEVGTVTKQSISELEGKIMPANYEENSLIWVAVDQPVKDSSFLSSKILELCGDLPIFWLKPMYPKEIQRERREVVRNSAPSTTRRPHSEPRGNAGPGRLSNGTRPNVQDDAEPFNPDNPYHQQEGESMTFDPRLDHEGICCIECRRSYTHCQKICEPLGGYYPWPYNYQGCRSACRVVMPCSWWVARILGMV</sequence>
<dbReference type="EMBL" id="U43509">
    <property type="protein sequence ID" value="AAD00027.1"/>
    <property type="molecule type" value="mRNA"/>
</dbReference>
<dbReference type="EMBL" id="AK013975">
    <property type="protein sequence ID" value="BAB29095.1"/>
    <property type="molecule type" value="mRNA"/>
</dbReference>
<dbReference type="EMBL" id="CH466535">
    <property type="protein sequence ID" value="EDL35758.1"/>
    <property type="molecule type" value="Genomic_DNA"/>
</dbReference>
<dbReference type="EMBL" id="BC045152">
    <property type="protein sequence ID" value="AAH45152.1"/>
    <property type="molecule type" value="mRNA"/>
</dbReference>
<dbReference type="CCDS" id="CCDS27302.1"/>
<dbReference type="RefSeq" id="NP_001297584.1">
    <property type="nucleotide sequence ID" value="NM_001310655.1"/>
</dbReference>
<dbReference type="RefSeq" id="NP_034831.2">
    <property type="nucleotide sequence ID" value="NM_010701.4"/>
</dbReference>
<dbReference type="SMR" id="Q9Z1F6"/>
<dbReference type="FunCoup" id="Q9Z1F6">
    <property type="interactions" value="345"/>
</dbReference>
<dbReference type="STRING" id="10090.ENSMUSP00000126958"/>
<dbReference type="GlyCosmos" id="Q9Z1F6">
    <property type="glycosylation" value="1 site, No reported glycans"/>
</dbReference>
<dbReference type="GlyGen" id="Q9Z1F6">
    <property type="glycosylation" value="1 site"/>
</dbReference>
<dbReference type="PhosphoSitePlus" id="Q9Z1F6"/>
<dbReference type="SwissPalm" id="Q9Z1F6"/>
<dbReference type="CPTAC" id="non-CPTAC-3402"/>
<dbReference type="jPOST" id="Q9Z1F6"/>
<dbReference type="PaxDb" id="10090-ENSMUSP00000022603"/>
<dbReference type="ProteomicsDB" id="285511"/>
<dbReference type="Antibodypedia" id="24240">
    <property type="antibodies" value="198 antibodies from 28 providers"/>
</dbReference>
<dbReference type="DNASU" id="16840"/>
<dbReference type="Ensembl" id="ENSMUST00000022603.8">
    <property type="protein sequence ID" value="ENSMUSP00000022603.8"/>
    <property type="gene ID" value="ENSMUSG00000022025.14"/>
</dbReference>
<dbReference type="GeneID" id="16840"/>
<dbReference type="KEGG" id="mmu:16840"/>
<dbReference type="UCSC" id="uc007utg.2">
    <property type="organism name" value="mouse"/>
</dbReference>
<dbReference type="AGR" id="MGI:1341171"/>
<dbReference type="CTD" id="11061"/>
<dbReference type="MGI" id="MGI:1341171">
    <property type="gene designation" value="Cnmd"/>
</dbReference>
<dbReference type="VEuPathDB" id="HostDB:ENSMUSG00000022025"/>
<dbReference type="eggNOG" id="ENOG502QVPC">
    <property type="taxonomic scope" value="Eukaryota"/>
</dbReference>
<dbReference type="GeneTree" id="ENSGT00480000042679"/>
<dbReference type="InParanoid" id="Q9Z1F6"/>
<dbReference type="OMA" id="GNLPIFW"/>
<dbReference type="OrthoDB" id="5985282at2759"/>
<dbReference type="TreeFam" id="TF329712"/>
<dbReference type="BioGRID-ORCS" id="16840">
    <property type="hits" value="2 hits in 74 CRISPR screens"/>
</dbReference>
<dbReference type="ChiTaRS" id="Cnmd">
    <property type="organism name" value="mouse"/>
</dbReference>
<dbReference type="PRO" id="PR:Q9Z1F6"/>
<dbReference type="Proteomes" id="UP000000589">
    <property type="component" value="Chromosome 14"/>
</dbReference>
<dbReference type="RNAct" id="Q9Z1F6">
    <property type="molecule type" value="protein"/>
</dbReference>
<dbReference type="Bgee" id="ENSMUSG00000022025">
    <property type="expression patterns" value="Expressed in humerus cartilage element and 134 other cell types or tissues"/>
</dbReference>
<dbReference type="ExpressionAtlas" id="Q9Z1F6">
    <property type="expression patterns" value="baseline and differential"/>
</dbReference>
<dbReference type="GO" id="GO:0012505">
    <property type="term" value="C:endomembrane system"/>
    <property type="evidence" value="ECO:0007669"/>
    <property type="project" value="UniProtKB-SubCell"/>
</dbReference>
<dbReference type="GO" id="GO:0005576">
    <property type="term" value="C:extracellular region"/>
    <property type="evidence" value="ECO:0007669"/>
    <property type="project" value="UniProtKB-KW"/>
</dbReference>
<dbReference type="GO" id="GO:0016020">
    <property type="term" value="C:membrane"/>
    <property type="evidence" value="ECO:0007669"/>
    <property type="project" value="UniProtKB-KW"/>
</dbReference>
<dbReference type="GO" id="GO:0051216">
    <property type="term" value="P:cartilage development"/>
    <property type="evidence" value="ECO:0007669"/>
    <property type="project" value="UniProtKB-KW"/>
</dbReference>
<dbReference type="GO" id="GO:0001886">
    <property type="term" value="P:endothelial cell morphogenesis"/>
    <property type="evidence" value="ECO:0000314"/>
    <property type="project" value="MGI"/>
</dbReference>
<dbReference type="GO" id="GO:0016525">
    <property type="term" value="P:negative regulation of angiogenesis"/>
    <property type="evidence" value="ECO:0000314"/>
    <property type="project" value="MGI"/>
</dbReference>
<dbReference type="GO" id="GO:0001937">
    <property type="term" value="P:negative regulation of endothelial cell proliferation"/>
    <property type="evidence" value="ECO:0000314"/>
    <property type="project" value="MGI"/>
</dbReference>
<dbReference type="GO" id="GO:0030948">
    <property type="term" value="P:negative regulation of vascular endothelial growth factor receptor signaling pathway"/>
    <property type="evidence" value="ECO:0000315"/>
    <property type="project" value="MGI"/>
</dbReference>
<dbReference type="FunFam" id="3.30.390.150:FF:000001">
    <property type="entry name" value="leukocyte cell-derived chemotaxin 1"/>
    <property type="match status" value="1"/>
</dbReference>
<dbReference type="Gene3D" id="3.30.390.150">
    <property type="match status" value="1"/>
</dbReference>
<dbReference type="InterPro" id="IPR007084">
    <property type="entry name" value="BRICHOS_dom"/>
</dbReference>
<dbReference type="InterPro" id="IPR043405">
    <property type="entry name" value="Chondromodulin/Tenomodulin"/>
</dbReference>
<dbReference type="PANTHER" id="PTHR14064">
    <property type="entry name" value="CHONDROMODULIN-RELATED"/>
    <property type="match status" value="1"/>
</dbReference>
<dbReference type="PANTHER" id="PTHR14064:SF6">
    <property type="entry name" value="LEUKOCYTE CELL-DERIVED CHEMOTAXIN 1"/>
    <property type="match status" value="1"/>
</dbReference>
<dbReference type="Pfam" id="PF04089">
    <property type="entry name" value="BRICHOS"/>
    <property type="match status" value="1"/>
</dbReference>
<dbReference type="SMART" id="SM01039">
    <property type="entry name" value="BRICHOS"/>
    <property type="match status" value="1"/>
</dbReference>
<dbReference type="PROSITE" id="PS50869">
    <property type="entry name" value="BRICHOS"/>
    <property type="match status" value="1"/>
</dbReference>
<reference key="1">
    <citation type="submission" date="1995-12" db="EMBL/GenBank/DDBJ databases">
        <authorList>
            <person name="Hiraki Y."/>
            <person name="Shukunami C."/>
            <person name="Inoue H."/>
            <person name="Suzuki F."/>
        </authorList>
    </citation>
    <scope>NUCLEOTIDE SEQUENCE [MRNA]</scope>
</reference>
<reference key="2">
    <citation type="journal article" date="2005" name="Science">
        <title>The transcriptional landscape of the mammalian genome.</title>
        <authorList>
            <person name="Carninci P."/>
            <person name="Kasukawa T."/>
            <person name="Katayama S."/>
            <person name="Gough J."/>
            <person name="Frith M.C."/>
            <person name="Maeda N."/>
            <person name="Oyama R."/>
            <person name="Ravasi T."/>
            <person name="Lenhard B."/>
            <person name="Wells C."/>
            <person name="Kodzius R."/>
            <person name="Shimokawa K."/>
            <person name="Bajic V.B."/>
            <person name="Brenner S.E."/>
            <person name="Batalov S."/>
            <person name="Forrest A.R."/>
            <person name="Zavolan M."/>
            <person name="Davis M.J."/>
            <person name="Wilming L.G."/>
            <person name="Aidinis V."/>
            <person name="Allen J.E."/>
            <person name="Ambesi-Impiombato A."/>
            <person name="Apweiler R."/>
            <person name="Aturaliya R.N."/>
            <person name="Bailey T.L."/>
            <person name="Bansal M."/>
            <person name="Baxter L."/>
            <person name="Beisel K.W."/>
            <person name="Bersano T."/>
            <person name="Bono H."/>
            <person name="Chalk A.M."/>
            <person name="Chiu K.P."/>
            <person name="Choudhary V."/>
            <person name="Christoffels A."/>
            <person name="Clutterbuck D.R."/>
            <person name="Crowe M.L."/>
            <person name="Dalla E."/>
            <person name="Dalrymple B.P."/>
            <person name="de Bono B."/>
            <person name="Della Gatta G."/>
            <person name="di Bernardo D."/>
            <person name="Down T."/>
            <person name="Engstrom P."/>
            <person name="Fagiolini M."/>
            <person name="Faulkner G."/>
            <person name="Fletcher C.F."/>
            <person name="Fukushima T."/>
            <person name="Furuno M."/>
            <person name="Futaki S."/>
            <person name="Gariboldi M."/>
            <person name="Georgii-Hemming P."/>
            <person name="Gingeras T.R."/>
            <person name="Gojobori T."/>
            <person name="Green R.E."/>
            <person name="Gustincich S."/>
            <person name="Harbers M."/>
            <person name="Hayashi Y."/>
            <person name="Hensch T.K."/>
            <person name="Hirokawa N."/>
            <person name="Hill D."/>
            <person name="Huminiecki L."/>
            <person name="Iacono M."/>
            <person name="Ikeo K."/>
            <person name="Iwama A."/>
            <person name="Ishikawa T."/>
            <person name="Jakt M."/>
            <person name="Kanapin A."/>
            <person name="Katoh M."/>
            <person name="Kawasawa Y."/>
            <person name="Kelso J."/>
            <person name="Kitamura H."/>
            <person name="Kitano H."/>
            <person name="Kollias G."/>
            <person name="Krishnan S.P."/>
            <person name="Kruger A."/>
            <person name="Kummerfeld S.K."/>
            <person name="Kurochkin I.V."/>
            <person name="Lareau L.F."/>
            <person name="Lazarevic D."/>
            <person name="Lipovich L."/>
            <person name="Liu J."/>
            <person name="Liuni S."/>
            <person name="McWilliam S."/>
            <person name="Madan Babu M."/>
            <person name="Madera M."/>
            <person name="Marchionni L."/>
            <person name="Matsuda H."/>
            <person name="Matsuzawa S."/>
            <person name="Miki H."/>
            <person name="Mignone F."/>
            <person name="Miyake S."/>
            <person name="Morris K."/>
            <person name="Mottagui-Tabar S."/>
            <person name="Mulder N."/>
            <person name="Nakano N."/>
            <person name="Nakauchi H."/>
            <person name="Ng P."/>
            <person name="Nilsson R."/>
            <person name="Nishiguchi S."/>
            <person name="Nishikawa S."/>
            <person name="Nori F."/>
            <person name="Ohara O."/>
            <person name="Okazaki Y."/>
            <person name="Orlando V."/>
            <person name="Pang K.C."/>
            <person name="Pavan W.J."/>
            <person name="Pavesi G."/>
            <person name="Pesole G."/>
            <person name="Petrovsky N."/>
            <person name="Piazza S."/>
            <person name="Reed J."/>
            <person name="Reid J.F."/>
            <person name="Ring B.Z."/>
            <person name="Ringwald M."/>
            <person name="Rost B."/>
            <person name="Ruan Y."/>
            <person name="Salzberg S.L."/>
            <person name="Sandelin A."/>
            <person name="Schneider C."/>
            <person name="Schoenbach C."/>
            <person name="Sekiguchi K."/>
            <person name="Semple C.A."/>
            <person name="Seno S."/>
            <person name="Sessa L."/>
            <person name="Sheng Y."/>
            <person name="Shibata Y."/>
            <person name="Shimada H."/>
            <person name="Shimada K."/>
            <person name="Silva D."/>
            <person name="Sinclair B."/>
            <person name="Sperling S."/>
            <person name="Stupka E."/>
            <person name="Sugiura K."/>
            <person name="Sultana R."/>
            <person name="Takenaka Y."/>
            <person name="Taki K."/>
            <person name="Tammoja K."/>
            <person name="Tan S.L."/>
            <person name="Tang S."/>
            <person name="Taylor M.S."/>
            <person name="Tegner J."/>
            <person name="Teichmann S.A."/>
            <person name="Ueda H.R."/>
            <person name="van Nimwegen E."/>
            <person name="Verardo R."/>
            <person name="Wei C.L."/>
            <person name="Yagi K."/>
            <person name="Yamanishi H."/>
            <person name="Zabarovsky E."/>
            <person name="Zhu S."/>
            <person name="Zimmer A."/>
            <person name="Hide W."/>
            <person name="Bult C."/>
            <person name="Grimmond S.M."/>
            <person name="Teasdale R.D."/>
            <person name="Liu E.T."/>
            <person name="Brusic V."/>
            <person name="Quackenbush J."/>
            <person name="Wahlestedt C."/>
            <person name="Mattick J.S."/>
            <person name="Hume D.A."/>
            <person name="Kai C."/>
            <person name="Sasaki D."/>
            <person name="Tomaru Y."/>
            <person name="Fukuda S."/>
            <person name="Kanamori-Katayama M."/>
            <person name="Suzuki M."/>
            <person name="Aoki J."/>
            <person name="Arakawa T."/>
            <person name="Iida J."/>
            <person name="Imamura K."/>
            <person name="Itoh M."/>
            <person name="Kato T."/>
            <person name="Kawaji H."/>
            <person name="Kawagashira N."/>
            <person name="Kawashima T."/>
            <person name="Kojima M."/>
            <person name="Kondo S."/>
            <person name="Konno H."/>
            <person name="Nakano K."/>
            <person name="Ninomiya N."/>
            <person name="Nishio T."/>
            <person name="Okada M."/>
            <person name="Plessy C."/>
            <person name="Shibata K."/>
            <person name="Shiraki T."/>
            <person name="Suzuki S."/>
            <person name="Tagami M."/>
            <person name="Waki K."/>
            <person name="Watahiki A."/>
            <person name="Okamura-Oho Y."/>
            <person name="Suzuki H."/>
            <person name="Kawai J."/>
            <person name="Hayashizaki Y."/>
        </authorList>
    </citation>
    <scope>NUCLEOTIDE SEQUENCE [LARGE SCALE MRNA]</scope>
    <source>
        <strain>C57BL/6J</strain>
        <tissue>Embryonic head</tissue>
    </source>
</reference>
<reference key="3">
    <citation type="submission" date="2005-09" db="EMBL/GenBank/DDBJ databases">
        <authorList>
            <person name="Mural R.J."/>
            <person name="Adams M.D."/>
            <person name="Myers E.W."/>
            <person name="Smith H.O."/>
            <person name="Venter J.C."/>
        </authorList>
    </citation>
    <scope>NUCLEOTIDE SEQUENCE [LARGE SCALE GENOMIC DNA]</scope>
</reference>
<reference key="4">
    <citation type="journal article" date="2004" name="Genome Res.">
        <title>The status, quality, and expansion of the NIH full-length cDNA project: the Mammalian Gene Collection (MGC).</title>
        <authorList>
            <consortium name="The MGC Project Team"/>
        </authorList>
    </citation>
    <scope>NUCLEOTIDE SEQUENCE [LARGE SCALE MRNA]</scope>
    <source>
        <strain>FVB/N-3</strain>
        <tissue>Mammary tumor</tissue>
    </source>
</reference>
<reference key="5">
    <citation type="journal article" date="2006" name="Nat. Med.">
        <title>Chondromodulin-I maintains cardiac valvular function by preventing angiogenesis.</title>
        <authorList>
            <person name="Yoshioka M."/>
            <person name="Yuasa S."/>
            <person name="Matsumura K."/>
            <person name="Kimura K."/>
            <person name="Shiomi T."/>
            <person name="Kimura N."/>
            <person name="Shukunami C."/>
            <person name="Okada Y."/>
            <person name="Mukai M."/>
            <person name="Shin H."/>
            <person name="Yozu R."/>
            <person name="Sata M."/>
            <person name="Ogawa S."/>
            <person name="Hiraki Y."/>
            <person name="Fukuda K."/>
        </authorList>
    </citation>
    <scope>FUNCTION</scope>
    <scope>TISSUE SPECIFICITY</scope>
    <scope>DEVELOPMENTAL STAGE</scope>
    <scope>DISRUPTION PHENOTYPE</scope>
</reference>
<name>CNMD_MOUSE</name>
<accession>Q9Z1F6</accession>
<accession>Q80UX1</accession>
<accession>Q9CXU5</accession>
<evidence type="ECO:0000250" key="1"/>
<evidence type="ECO:0000255" key="2"/>
<evidence type="ECO:0000255" key="3">
    <source>
        <dbReference type="PROSITE-ProRule" id="PRU00255"/>
    </source>
</evidence>
<evidence type="ECO:0000256" key="4">
    <source>
        <dbReference type="SAM" id="MobiDB-lite"/>
    </source>
</evidence>
<evidence type="ECO:0000269" key="5">
    <source>
    </source>
</evidence>
<evidence type="ECO:0000305" key="6"/>
<evidence type="ECO:0000312" key="7">
    <source>
        <dbReference type="MGI" id="MGI:1341171"/>
    </source>
</evidence>